<organism>
    <name type="scientific">Methanoculleus marisnigri (strain ATCC 35101 / DSM 1498 / JR1)</name>
    <dbReference type="NCBI Taxonomy" id="368407"/>
    <lineage>
        <taxon>Archaea</taxon>
        <taxon>Methanobacteriati</taxon>
        <taxon>Methanobacteriota</taxon>
        <taxon>Stenosarchaea group</taxon>
        <taxon>Methanomicrobia</taxon>
        <taxon>Methanomicrobiales</taxon>
        <taxon>Methanomicrobiaceae</taxon>
        <taxon>Methanoculleus</taxon>
    </lineage>
</organism>
<sequence length="205" mass="23020">MLITIEGIDGSGKSTLLARLRELLADLDPLFTREPGATWVGESVRRAIAERMDPITEALLFCADHAAHIDTVIRPALDEGRLVISDRYADSRFAYQPVVLDGVLPDPLSWLRRIHEGWSIRPDRTFLLVLPVEDAVSRLGPEKKREYFENAAILEQVQENYLNLAAADPLRFVVVDALLPKEEVARFIAGEIRAGARSSRRRPRA</sequence>
<name>KTHY_METMJ</name>
<keyword id="KW-0067">ATP-binding</keyword>
<keyword id="KW-0418">Kinase</keyword>
<keyword id="KW-0545">Nucleotide biosynthesis</keyword>
<keyword id="KW-0547">Nucleotide-binding</keyword>
<keyword id="KW-0808">Transferase</keyword>
<proteinExistence type="inferred from homology"/>
<accession>A3CVV0</accession>
<reference key="1">
    <citation type="journal article" date="2009" name="Stand. Genomic Sci.">
        <title>Complete genome sequence of Methanoculleus marisnigri Romesser et al. 1981 type strain JR1.</title>
        <authorList>
            <person name="Anderson I.J."/>
            <person name="Sieprawska-Lupa M."/>
            <person name="Lapidus A."/>
            <person name="Nolan M."/>
            <person name="Copeland A."/>
            <person name="Glavina Del Rio T."/>
            <person name="Tice H."/>
            <person name="Dalin E."/>
            <person name="Barry K."/>
            <person name="Saunders E."/>
            <person name="Han C."/>
            <person name="Brettin T."/>
            <person name="Detter J.C."/>
            <person name="Bruce D."/>
            <person name="Mikhailova N."/>
            <person name="Pitluck S."/>
            <person name="Hauser L."/>
            <person name="Land M."/>
            <person name="Lucas S."/>
            <person name="Richardson P."/>
            <person name="Whitman W.B."/>
            <person name="Kyrpides N.C."/>
        </authorList>
    </citation>
    <scope>NUCLEOTIDE SEQUENCE [LARGE SCALE GENOMIC DNA]</scope>
    <source>
        <strain>ATCC 35101 / DSM 1498 / JR1</strain>
    </source>
</reference>
<evidence type="ECO:0000255" key="1">
    <source>
        <dbReference type="HAMAP-Rule" id="MF_00165"/>
    </source>
</evidence>
<protein>
    <recommendedName>
        <fullName evidence="1">Probable thymidylate kinase</fullName>
        <ecNumber evidence="1">2.7.4.9</ecNumber>
    </recommendedName>
    <alternativeName>
        <fullName evidence="1">dTMP kinase</fullName>
    </alternativeName>
</protein>
<feature type="chain" id="PRO_1000023225" description="Probable thymidylate kinase">
    <location>
        <begin position="1"/>
        <end position="205"/>
    </location>
</feature>
<feature type="binding site" evidence="1">
    <location>
        <begin position="7"/>
        <end position="14"/>
    </location>
    <ligand>
        <name>ATP</name>
        <dbReference type="ChEBI" id="CHEBI:30616"/>
    </ligand>
</feature>
<dbReference type="EC" id="2.7.4.9" evidence="1"/>
<dbReference type="EMBL" id="CP000562">
    <property type="protein sequence ID" value="ABN57500.1"/>
    <property type="molecule type" value="Genomic_DNA"/>
</dbReference>
<dbReference type="RefSeq" id="WP_011844411.1">
    <property type="nucleotide sequence ID" value="NC_009051.1"/>
</dbReference>
<dbReference type="SMR" id="A3CVV0"/>
<dbReference type="STRING" id="368407.Memar_1571"/>
<dbReference type="GeneID" id="4847502"/>
<dbReference type="GeneID" id="76729641"/>
<dbReference type="KEGG" id="mem:Memar_1571"/>
<dbReference type="eggNOG" id="arCOG01891">
    <property type="taxonomic scope" value="Archaea"/>
</dbReference>
<dbReference type="HOGENOM" id="CLU_049131_0_2_2"/>
<dbReference type="OrthoDB" id="43083at2157"/>
<dbReference type="Proteomes" id="UP000002146">
    <property type="component" value="Chromosome"/>
</dbReference>
<dbReference type="GO" id="GO:0005737">
    <property type="term" value="C:cytoplasm"/>
    <property type="evidence" value="ECO:0007669"/>
    <property type="project" value="TreeGrafter"/>
</dbReference>
<dbReference type="GO" id="GO:0005524">
    <property type="term" value="F:ATP binding"/>
    <property type="evidence" value="ECO:0007669"/>
    <property type="project" value="UniProtKB-UniRule"/>
</dbReference>
<dbReference type="GO" id="GO:0004798">
    <property type="term" value="F:dTMP kinase activity"/>
    <property type="evidence" value="ECO:0007669"/>
    <property type="project" value="UniProtKB-UniRule"/>
</dbReference>
<dbReference type="GO" id="GO:0006233">
    <property type="term" value="P:dTDP biosynthetic process"/>
    <property type="evidence" value="ECO:0007669"/>
    <property type="project" value="InterPro"/>
</dbReference>
<dbReference type="GO" id="GO:0006235">
    <property type="term" value="P:dTTP biosynthetic process"/>
    <property type="evidence" value="ECO:0007669"/>
    <property type="project" value="UniProtKB-UniRule"/>
</dbReference>
<dbReference type="GO" id="GO:0006227">
    <property type="term" value="P:dUDP biosynthetic process"/>
    <property type="evidence" value="ECO:0007669"/>
    <property type="project" value="TreeGrafter"/>
</dbReference>
<dbReference type="CDD" id="cd01672">
    <property type="entry name" value="TMPK"/>
    <property type="match status" value="1"/>
</dbReference>
<dbReference type="Gene3D" id="3.40.50.300">
    <property type="entry name" value="P-loop containing nucleotide triphosphate hydrolases"/>
    <property type="match status" value="1"/>
</dbReference>
<dbReference type="HAMAP" id="MF_00165">
    <property type="entry name" value="Thymidylate_kinase"/>
    <property type="match status" value="1"/>
</dbReference>
<dbReference type="InterPro" id="IPR027417">
    <property type="entry name" value="P-loop_NTPase"/>
</dbReference>
<dbReference type="InterPro" id="IPR039430">
    <property type="entry name" value="Thymidylate_kin-like_dom"/>
</dbReference>
<dbReference type="InterPro" id="IPR018094">
    <property type="entry name" value="Thymidylate_kinase"/>
</dbReference>
<dbReference type="NCBIfam" id="TIGR00041">
    <property type="entry name" value="DTMP_kinase"/>
    <property type="match status" value="1"/>
</dbReference>
<dbReference type="PANTHER" id="PTHR10344">
    <property type="entry name" value="THYMIDYLATE KINASE"/>
    <property type="match status" value="1"/>
</dbReference>
<dbReference type="PANTHER" id="PTHR10344:SF4">
    <property type="entry name" value="UMP-CMP KINASE 2, MITOCHONDRIAL"/>
    <property type="match status" value="1"/>
</dbReference>
<dbReference type="Pfam" id="PF02223">
    <property type="entry name" value="Thymidylate_kin"/>
    <property type="match status" value="1"/>
</dbReference>
<dbReference type="SUPFAM" id="SSF52540">
    <property type="entry name" value="P-loop containing nucleoside triphosphate hydrolases"/>
    <property type="match status" value="1"/>
</dbReference>
<gene>
    <name evidence="1" type="primary">tmk</name>
    <name type="ordered locus">Memar_1571</name>
</gene>
<comment type="catalytic activity">
    <reaction evidence="1">
        <text>dTMP + ATP = dTDP + ADP</text>
        <dbReference type="Rhea" id="RHEA:13517"/>
        <dbReference type="ChEBI" id="CHEBI:30616"/>
        <dbReference type="ChEBI" id="CHEBI:58369"/>
        <dbReference type="ChEBI" id="CHEBI:63528"/>
        <dbReference type="ChEBI" id="CHEBI:456216"/>
        <dbReference type="EC" id="2.7.4.9"/>
    </reaction>
</comment>
<comment type="similarity">
    <text evidence="1">Belongs to the thymidylate kinase family.</text>
</comment>